<evidence type="ECO:0000250" key="1">
    <source>
        <dbReference type="UniProtKB" id="P05719"/>
    </source>
</evidence>
<evidence type="ECO:0000269" key="2">
    <source>
    </source>
</evidence>
<evidence type="ECO:0000303" key="3">
    <source>
    </source>
</evidence>
<evidence type="ECO:0000305" key="4"/>
<evidence type="ECO:0000305" key="5">
    <source>
    </source>
</evidence>
<accession>P75159</accession>
<sequence length="375" mass="42650">MTPKLKLNTNSNWTKKTLGSLFELKKGEMLEKELLAPDGKYEYFNGGIKASGRTNEFNTFKNTISIIIGGSCGYVRLADKDYFCGQSSCTLTVLDPLEIDLKFAYYALKSQEEKITSLASGTTIKNIRLSDLKDLPIPLVKSIQDQRTIAHALSVFDLRIEHLNELIEVNRKLRDEYAHKLFTLDPDFLTHWNLHELHEQMGEISLGEVFHLKSGKYLKADERFEDGKFPYYGAGIESTSFVNEPNTKGDTLSMIANGYSIGNIRYHTIPWFNGTGGIAMEALKPNKTYVPFFYCALKYMQKDLKERFKRDESPFISLKLAGEIKVPFVKSFALQRKAGKIIYLLDKTLEECKEEAKSLISIRDNLLGKLFPTLS</sequence>
<proteinExistence type="evidence at protein level"/>
<reference key="1">
    <citation type="journal article" date="1996" name="Nucleic Acids Res.">
        <title>Complete sequence analysis of the genome of the bacterium Mycoplasma pneumoniae.</title>
        <authorList>
            <person name="Himmelreich R."/>
            <person name="Hilbert H."/>
            <person name="Plagens H."/>
            <person name="Pirkl E."/>
            <person name="Li B.-C."/>
            <person name="Herrmann R."/>
        </authorList>
    </citation>
    <scope>NUCLEOTIDE SEQUENCE [LARGE SCALE GENOMIC DNA]</scope>
    <source>
        <strain>ATCC 29342 / M129 / Subtype 1</strain>
    </source>
</reference>
<reference key="2">
    <citation type="journal article" date="2003" name="Nucleic Acids Res.">
        <title>A nomenclature for restriction enzymes, DNA methyltransferases, homing endonucleases and their genes.</title>
        <authorList>
            <person name="Roberts R.J."/>
            <person name="Belfort M."/>
            <person name="Bestor T."/>
            <person name="Bhagwat A.S."/>
            <person name="Bickle T.A."/>
            <person name="Bitinaite J."/>
            <person name="Blumenthal R.M."/>
            <person name="Degtyarev S.K."/>
            <person name="Dryden D.T."/>
            <person name="Dybvig K."/>
            <person name="Firman K."/>
            <person name="Gromova E.S."/>
            <person name="Gumport R.I."/>
            <person name="Halford S.E."/>
            <person name="Hattman S."/>
            <person name="Heitman J."/>
            <person name="Hornby D.P."/>
            <person name="Janulaitis A."/>
            <person name="Jeltsch A."/>
            <person name="Josephsen J."/>
            <person name="Kiss A."/>
            <person name="Klaenhammer T.R."/>
            <person name="Kobayashi I."/>
            <person name="Kong H."/>
            <person name="Krueger D.H."/>
            <person name="Lacks S."/>
            <person name="Marinus M.G."/>
            <person name="Miyahara M."/>
            <person name="Morgan R.D."/>
            <person name="Murray N.E."/>
            <person name="Nagaraja V."/>
            <person name="Piekarowicz A."/>
            <person name="Pingoud A."/>
            <person name="Raleigh E."/>
            <person name="Rao D.N."/>
            <person name="Reich N."/>
            <person name="Repin V.E."/>
            <person name="Selker E.U."/>
            <person name="Shaw P.C."/>
            <person name="Stein D.C."/>
            <person name="Stoddard B.L."/>
            <person name="Szybalski W."/>
            <person name="Trautner T.A."/>
            <person name="Van Etten J.L."/>
            <person name="Vitor J.M."/>
            <person name="Wilson G.G."/>
            <person name="Xu S.Y."/>
        </authorList>
    </citation>
    <scope>NOMENCLATURE</scope>
</reference>
<reference key="3">
    <citation type="journal article" date="2013" name="PLoS Genet.">
        <title>Comprehensive methylome characterization of Mycoplasma genitalium and Mycoplasma pneumoniae at single-base resolution.</title>
        <authorList>
            <person name="Lluch-Senar M."/>
            <person name="Luong K."/>
            <person name="Llorens-Rico V."/>
            <person name="Delgado J."/>
            <person name="Fang G."/>
            <person name="Spittle K."/>
            <person name="Clark T.A."/>
            <person name="Schadt E."/>
            <person name="Turner S.W."/>
            <person name="Korlach J."/>
            <person name="Serrano L."/>
        </authorList>
    </citation>
    <scope>INDUCTION</scope>
    <scope>DNA-BINDING</scope>
    <source>
        <strain>ATCC 29342 / M129 / Subtype 1</strain>
    </source>
</reference>
<dbReference type="EMBL" id="U00089">
    <property type="protein sequence ID" value="AAB95852.1"/>
    <property type="molecule type" value="Genomic_DNA"/>
</dbReference>
<dbReference type="PIR" id="S73530">
    <property type="entry name" value="S73530"/>
</dbReference>
<dbReference type="RefSeq" id="NP_110327.1">
    <property type="nucleotide sequence ID" value="NC_000912.1"/>
</dbReference>
<dbReference type="RefSeq" id="WP_010874995.1">
    <property type="nucleotide sequence ID" value="NC_000912.1"/>
</dbReference>
<dbReference type="SMR" id="P75159"/>
<dbReference type="IntAct" id="P75159">
    <property type="interactions" value="1"/>
</dbReference>
<dbReference type="STRING" id="272634.MPN_638"/>
<dbReference type="REBASE" id="6863">
    <property type="entry name" value="S.MpnORF638P"/>
</dbReference>
<dbReference type="EnsemblBacteria" id="AAB95852">
    <property type="protein sequence ID" value="AAB95852"/>
    <property type="gene ID" value="MPN_638"/>
</dbReference>
<dbReference type="KEGG" id="mpn:MPN_638"/>
<dbReference type="PATRIC" id="fig|272634.6.peg.701"/>
<dbReference type="HOGENOM" id="CLU_721242_0_0_14"/>
<dbReference type="OrthoDB" id="396674at2"/>
<dbReference type="BioCyc" id="MPNE272634:G1GJ3-1021-MONOMER"/>
<dbReference type="PRO" id="PR:P75159"/>
<dbReference type="Proteomes" id="UP000000808">
    <property type="component" value="Chromosome"/>
</dbReference>
<dbReference type="GO" id="GO:0003677">
    <property type="term" value="F:DNA binding"/>
    <property type="evidence" value="ECO:0007669"/>
    <property type="project" value="UniProtKB-KW"/>
</dbReference>
<dbReference type="GO" id="GO:0009307">
    <property type="term" value="P:DNA restriction-modification system"/>
    <property type="evidence" value="ECO:0007669"/>
    <property type="project" value="UniProtKB-KW"/>
</dbReference>
<dbReference type="CDD" id="cd17291">
    <property type="entry name" value="RMtype1_S_MgeORF438P-TRD-CR_like"/>
    <property type="match status" value="1"/>
</dbReference>
<dbReference type="Gene3D" id="1.10.287.1120">
    <property type="entry name" value="Bipartite methylase S protein"/>
    <property type="match status" value="1"/>
</dbReference>
<dbReference type="Gene3D" id="3.90.220.20">
    <property type="entry name" value="DNA methylase specificity domains"/>
    <property type="match status" value="2"/>
</dbReference>
<dbReference type="InterPro" id="IPR000055">
    <property type="entry name" value="Restrct_endonuc_typeI_TRD"/>
</dbReference>
<dbReference type="InterPro" id="IPR044946">
    <property type="entry name" value="Restrct_endonuc_typeI_TRD_sf"/>
</dbReference>
<dbReference type="InterPro" id="IPR052021">
    <property type="entry name" value="Type-I_RS_S_subunit"/>
</dbReference>
<dbReference type="PANTHER" id="PTHR30408:SF13">
    <property type="entry name" value="TYPE I RESTRICTION ENZYME HINDI SPECIFICITY SUBUNIT"/>
    <property type="match status" value="1"/>
</dbReference>
<dbReference type="PANTHER" id="PTHR30408">
    <property type="entry name" value="TYPE-1 RESTRICTION ENZYME ECOKI SPECIFICITY PROTEIN"/>
    <property type="match status" value="1"/>
</dbReference>
<dbReference type="Pfam" id="PF01420">
    <property type="entry name" value="Methylase_S"/>
    <property type="match status" value="2"/>
</dbReference>
<dbReference type="SUPFAM" id="SSF116734">
    <property type="entry name" value="DNA methylase specificity domain"/>
    <property type="match status" value="2"/>
</dbReference>
<keyword id="KW-0238">DNA-binding</keyword>
<keyword id="KW-1185">Reference proteome</keyword>
<keyword id="KW-0680">Restriction system</keyword>
<gene>
    <name type="ordered locus">MPN_638</name>
    <name type="ORF">E30_orf375</name>
    <name type="ORF">MP204</name>
</gene>
<organism>
    <name type="scientific">Mycoplasma pneumoniae (strain ATCC 29342 / M129 / Subtype 1)</name>
    <name type="common">Mycoplasmoides pneumoniae</name>
    <dbReference type="NCBI Taxonomy" id="272634"/>
    <lineage>
        <taxon>Bacteria</taxon>
        <taxon>Bacillati</taxon>
        <taxon>Mycoplasmatota</taxon>
        <taxon>Mycoplasmoidales</taxon>
        <taxon>Mycoplasmoidaceae</taxon>
        <taxon>Mycoplasmoides</taxon>
    </lineage>
</organism>
<name>T1SX_MYCPN</name>
<feature type="chain" id="PRO_0000198043" description="Putative type I specificity subunit S.MpnORF638P">
    <location>
        <begin position="1"/>
        <end position="375"/>
    </location>
</feature>
<comment type="function">
    <text evidence="3 5">The specificity (S) subunit of a type I methyltransferase (MTase); this subunit dictates DNA sequence specificity. The single R subunit has multiple frameshifts and is probably not expressed.</text>
</comment>
<comment type="subunit">
    <text evidence="1">The methyltransferase is composed of M and S polypeptides.</text>
</comment>
<comment type="induction">
    <text evidence="2">Highly expressed after 6 and 96 hours growth, there are fewer copies at 96 hours (at protein level).</text>
</comment>
<comment type="domain">
    <text evidence="1">Contains two DNA recognition domains, each specifying recognition of one of the two defined components of the target sequence.</text>
</comment>
<comment type="similarity">
    <text evidence="4">Belongs to the type-I restriction system S methylase family.</text>
</comment>
<protein>
    <recommendedName>
        <fullName evidence="3">Putative type I specificity subunit S.MpnORF638P</fullName>
        <shortName>S protein</shortName>
        <shortName evidence="3">S.MpnORF638P</shortName>
    </recommendedName>
</protein>